<keyword id="KW-0342">GTP-binding</keyword>
<keyword id="KW-0547">Nucleotide-binding</keyword>
<keyword id="KW-1185">Reference proteome</keyword>
<keyword id="KW-0677">Repeat</keyword>
<keyword id="KW-0690">Ribosome biogenesis</keyword>
<gene>
    <name evidence="1" type="primary">der</name>
    <name type="synonym">engA</name>
    <name type="ordered locus">CHU_3073</name>
</gene>
<name>DER_CYTH3</name>
<accession>Q11QK1</accession>
<reference key="1">
    <citation type="journal article" date="2007" name="Appl. Environ. Microbiol.">
        <title>Genome sequence of the cellulolytic gliding bacterium Cytophaga hutchinsonii.</title>
        <authorList>
            <person name="Xie G."/>
            <person name="Bruce D.C."/>
            <person name="Challacombe J.F."/>
            <person name="Chertkov O."/>
            <person name="Detter J.C."/>
            <person name="Gilna P."/>
            <person name="Han C.S."/>
            <person name="Lucas S."/>
            <person name="Misra M."/>
            <person name="Myers G.L."/>
            <person name="Richardson P."/>
            <person name="Tapia R."/>
            <person name="Thayer N."/>
            <person name="Thompson L.S."/>
            <person name="Brettin T.S."/>
            <person name="Henrissat B."/>
            <person name="Wilson D.B."/>
            <person name="McBride M.J."/>
        </authorList>
    </citation>
    <scope>NUCLEOTIDE SEQUENCE [LARGE SCALE GENOMIC DNA]</scope>
    <source>
        <strain>ATCC 33406 / DSM 1761 / JCM 20678 / CIP 103989 / IAM 12607 / NBRC 15051 / NCIMB 9469 / D465</strain>
    </source>
</reference>
<proteinExistence type="inferred from homology"/>
<organism>
    <name type="scientific">Cytophaga hutchinsonii (strain ATCC 33406 / DSM 1761 / CIP 103989 / NBRC 15051 / NCIMB 9469 / D465)</name>
    <dbReference type="NCBI Taxonomy" id="269798"/>
    <lineage>
        <taxon>Bacteria</taxon>
        <taxon>Pseudomonadati</taxon>
        <taxon>Bacteroidota</taxon>
        <taxon>Cytophagia</taxon>
        <taxon>Cytophagales</taxon>
        <taxon>Cytophagaceae</taxon>
        <taxon>Cytophaga</taxon>
    </lineage>
</organism>
<feature type="chain" id="PRO_1000011613" description="GTPase Der">
    <location>
        <begin position="1"/>
        <end position="435"/>
    </location>
</feature>
<feature type="domain" description="EngA-type G 1">
    <location>
        <begin position="3"/>
        <end position="167"/>
    </location>
</feature>
<feature type="domain" description="EngA-type G 2">
    <location>
        <begin position="176"/>
        <end position="351"/>
    </location>
</feature>
<feature type="domain" description="KH-like" evidence="1">
    <location>
        <begin position="352"/>
        <end position="435"/>
    </location>
</feature>
<feature type="binding site" evidence="1">
    <location>
        <begin position="9"/>
        <end position="16"/>
    </location>
    <ligand>
        <name>GTP</name>
        <dbReference type="ChEBI" id="CHEBI:37565"/>
        <label>1</label>
    </ligand>
</feature>
<feature type="binding site" evidence="1">
    <location>
        <begin position="56"/>
        <end position="60"/>
    </location>
    <ligand>
        <name>GTP</name>
        <dbReference type="ChEBI" id="CHEBI:37565"/>
        <label>1</label>
    </ligand>
</feature>
<feature type="binding site" evidence="1">
    <location>
        <begin position="119"/>
        <end position="122"/>
    </location>
    <ligand>
        <name>GTP</name>
        <dbReference type="ChEBI" id="CHEBI:37565"/>
        <label>1</label>
    </ligand>
</feature>
<feature type="binding site" evidence="1">
    <location>
        <begin position="182"/>
        <end position="189"/>
    </location>
    <ligand>
        <name>GTP</name>
        <dbReference type="ChEBI" id="CHEBI:37565"/>
        <label>2</label>
    </ligand>
</feature>
<feature type="binding site" evidence="1">
    <location>
        <begin position="229"/>
        <end position="233"/>
    </location>
    <ligand>
        <name>GTP</name>
        <dbReference type="ChEBI" id="CHEBI:37565"/>
        <label>2</label>
    </ligand>
</feature>
<feature type="binding site" evidence="1">
    <location>
        <begin position="294"/>
        <end position="297"/>
    </location>
    <ligand>
        <name>GTP</name>
        <dbReference type="ChEBI" id="CHEBI:37565"/>
        <label>2</label>
    </ligand>
</feature>
<protein>
    <recommendedName>
        <fullName evidence="1">GTPase Der</fullName>
    </recommendedName>
    <alternativeName>
        <fullName evidence="1">GTP-binding protein EngA</fullName>
    </alternativeName>
</protein>
<evidence type="ECO:0000255" key="1">
    <source>
        <dbReference type="HAMAP-Rule" id="MF_00195"/>
    </source>
</evidence>
<sequence length="435" mass="49329">MSNIVAIVGRPNVGKSTFFNRLVGARIAIMDDESGVTRDRHYGEAEWCGKFFTVIDTGGYVTGSDDIFEGQIRDQVDIAIDEADVILFLVDSDVGVHHLDQEFANKIRRSKKPVILVANKSDNNKRLHMSAEFYELGMGEVWPISSQNGTGTGELLDEVISHFKDEGEEDPNKGIPRIAVLGRPNAGKSSYVNALLGTNRSIVTDQAGTTRDSITSHYNVFGKEFIFVDTAGIRKKSRIKEDVEYYSILRSVKALEESDVCVIMIDAERGIESQDMNIIWMAHNNKKGIVILVNKWDLIEKDSKTAQVFQENIREALKPIDYPLIMFISVLNKQRLFQSVEAIMKVYENRGKRIPTSELNDKILKEIDYNPPPATKQKYVKIKYVTQLPTKSPTFAFFCNLPQYVGESYSRFLEHKIRGYFDFEGVPISIVYRKK</sequence>
<comment type="function">
    <text evidence="1">GTPase that plays an essential role in the late steps of ribosome biogenesis.</text>
</comment>
<comment type="subunit">
    <text evidence="1">Associates with the 50S ribosomal subunit.</text>
</comment>
<comment type="similarity">
    <text evidence="1">Belongs to the TRAFAC class TrmE-Era-EngA-EngB-Septin-like GTPase superfamily. EngA (Der) GTPase family.</text>
</comment>
<dbReference type="EMBL" id="CP000383">
    <property type="protein sequence ID" value="ABG60313.1"/>
    <property type="molecule type" value="Genomic_DNA"/>
</dbReference>
<dbReference type="RefSeq" id="WP_011586422.1">
    <property type="nucleotide sequence ID" value="NC_008255.1"/>
</dbReference>
<dbReference type="SMR" id="Q11QK1"/>
<dbReference type="STRING" id="269798.CHU_3073"/>
<dbReference type="KEGG" id="chu:CHU_3073"/>
<dbReference type="eggNOG" id="COG1160">
    <property type="taxonomic scope" value="Bacteria"/>
</dbReference>
<dbReference type="HOGENOM" id="CLU_016077_6_2_10"/>
<dbReference type="OrthoDB" id="9805918at2"/>
<dbReference type="Proteomes" id="UP000001822">
    <property type="component" value="Chromosome"/>
</dbReference>
<dbReference type="GO" id="GO:0005525">
    <property type="term" value="F:GTP binding"/>
    <property type="evidence" value="ECO:0007669"/>
    <property type="project" value="UniProtKB-UniRule"/>
</dbReference>
<dbReference type="GO" id="GO:0043022">
    <property type="term" value="F:ribosome binding"/>
    <property type="evidence" value="ECO:0007669"/>
    <property type="project" value="TreeGrafter"/>
</dbReference>
<dbReference type="GO" id="GO:0042254">
    <property type="term" value="P:ribosome biogenesis"/>
    <property type="evidence" value="ECO:0007669"/>
    <property type="project" value="UniProtKB-KW"/>
</dbReference>
<dbReference type="CDD" id="cd01894">
    <property type="entry name" value="EngA1"/>
    <property type="match status" value="1"/>
</dbReference>
<dbReference type="CDD" id="cd01895">
    <property type="entry name" value="EngA2"/>
    <property type="match status" value="1"/>
</dbReference>
<dbReference type="FunFam" id="3.30.300.20:FF:000004">
    <property type="entry name" value="GTPase Der"/>
    <property type="match status" value="1"/>
</dbReference>
<dbReference type="FunFam" id="3.40.50.300:FF:000040">
    <property type="entry name" value="GTPase Der"/>
    <property type="match status" value="1"/>
</dbReference>
<dbReference type="FunFam" id="3.40.50.300:FF:000057">
    <property type="entry name" value="GTPase Der"/>
    <property type="match status" value="1"/>
</dbReference>
<dbReference type="Gene3D" id="3.30.300.20">
    <property type="match status" value="1"/>
</dbReference>
<dbReference type="Gene3D" id="3.40.50.300">
    <property type="entry name" value="P-loop containing nucleotide triphosphate hydrolases"/>
    <property type="match status" value="2"/>
</dbReference>
<dbReference type="HAMAP" id="MF_00195">
    <property type="entry name" value="GTPase_Der"/>
    <property type="match status" value="1"/>
</dbReference>
<dbReference type="InterPro" id="IPR031166">
    <property type="entry name" value="G_ENGA"/>
</dbReference>
<dbReference type="InterPro" id="IPR006073">
    <property type="entry name" value="GTP-bd"/>
</dbReference>
<dbReference type="InterPro" id="IPR016484">
    <property type="entry name" value="GTPase_Der"/>
</dbReference>
<dbReference type="InterPro" id="IPR032859">
    <property type="entry name" value="KH_dom-like"/>
</dbReference>
<dbReference type="InterPro" id="IPR015946">
    <property type="entry name" value="KH_dom-like_a/b"/>
</dbReference>
<dbReference type="InterPro" id="IPR027417">
    <property type="entry name" value="P-loop_NTPase"/>
</dbReference>
<dbReference type="InterPro" id="IPR005225">
    <property type="entry name" value="Small_GTP-bd"/>
</dbReference>
<dbReference type="NCBIfam" id="TIGR03594">
    <property type="entry name" value="GTPase_EngA"/>
    <property type="match status" value="1"/>
</dbReference>
<dbReference type="NCBIfam" id="TIGR00231">
    <property type="entry name" value="small_GTP"/>
    <property type="match status" value="2"/>
</dbReference>
<dbReference type="PANTHER" id="PTHR43834">
    <property type="entry name" value="GTPASE DER"/>
    <property type="match status" value="1"/>
</dbReference>
<dbReference type="PANTHER" id="PTHR43834:SF6">
    <property type="entry name" value="GTPASE DER"/>
    <property type="match status" value="1"/>
</dbReference>
<dbReference type="Pfam" id="PF14714">
    <property type="entry name" value="KH_dom-like"/>
    <property type="match status" value="1"/>
</dbReference>
<dbReference type="Pfam" id="PF01926">
    <property type="entry name" value="MMR_HSR1"/>
    <property type="match status" value="2"/>
</dbReference>
<dbReference type="PIRSF" id="PIRSF006485">
    <property type="entry name" value="GTP-binding_EngA"/>
    <property type="match status" value="1"/>
</dbReference>
<dbReference type="PRINTS" id="PR00326">
    <property type="entry name" value="GTP1OBG"/>
</dbReference>
<dbReference type="SUPFAM" id="SSF52540">
    <property type="entry name" value="P-loop containing nucleoside triphosphate hydrolases"/>
    <property type="match status" value="2"/>
</dbReference>
<dbReference type="PROSITE" id="PS51712">
    <property type="entry name" value="G_ENGA"/>
    <property type="match status" value="2"/>
</dbReference>